<comment type="function">
    <text evidence="1">Endonuclease IV plays a role in DNA repair. It cleaves phosphodiester bonds at apurinic or apyrimidinic (AP) sites, generating a 3'-hydroxyl group and a 5'-terminal sugar phosphate.</text>
</comment>
<comment type="catalytic activity">
    <reaction evidence="1">
        <text>Endonucleolytic cleavage to 5'-phosphooligonucleotide end-products.</text>
        <dbReference type="EC" id="3.1.21.2"/>
    </reaction>
</comment>
<comment type="cofactor">
    <cofactor evidence="1">
        <name>Zn(2+)</name>
        <dbReference type="ChEBI" id="CHEBI:29105"/>
    </cofactor>
    <text evidence="1">Binds 3 Zn(2+) ions.</text>
</comment>
<comment type="similarity">
    <text evidence="1">Belongs to the AP endonuclease 2 family.</text>
</comment>
<evidence type="ECO:0000255" key="1">
    <source>
        <dbReference type="HAMAP-Rule" id="MF_00152"/>
    </source>
</evidence>
<name>END4_AQUAE</name>
<accession>O67551</accession>
<protein>
    <recommendedName>
        <fullName evidence="1">Probable endonuclease 4</fullName>
        <ecNumber evidence="1">3.1.21.2</ecNumber>
    </recommendedName>
    <alternativeName>
        <fullName evidence="1">Endodeoxyribonuclease IV</fullName>
    </alternativeName>
    <alternativeName>
        <fullName evidence="1">Endonuclease IV</fullName>
    </alternativeName>
</protein>
<organism>
    <name type="scientific">Aquifex aeolicus (strain VF5)</name>
    <dbReference type="NCBI Taxonomy" id="224324"/>
    <lineage>
        <taxon>Bacteria</taxon>
        <taxon>Pseudomonadati</taxon>
        <taxon>Aquificota</taxon>
        <taxon>Aquificia</taxon>
        <taxon>Aquificales</taxon>
        <taxon>Aquificaceae</taxon>
        <taxon>Aquifex</taxon>
    </lineage>
</organism>
<keyword id="KW-0227">DNA damage</keyword>
<keyword id="KW-0234">DNA repair</keyword>
<keyword id="KW-0255">Endonuclease</keyword>
<keyword id="KW-0378">Hydrolase</keyword>
<keyword id="KW-0479">Metal-binding</keyword>
<keyword id="KW-0540">Nuclease</keyword>
<keyword id="KW-1185">Reference proteome</keyword>
<keyword id="KW-0862">Zinc</keyword>
<dbReference type="EC" id="3.1.21.2" evidence="1"/>
<dbReference type="EMBL" id="AE000657">
    <property type="protein sequence ID" value="AAC07514.1"/>
    <property type="molecule type" value="Genomic_DNA"/>
</dbReference>
<dbReference type="PIR" id="E70440">
    <property type="entry name" value="E70440"/>
</dbReference>
<dbReference type="RefSeq" id="NP_214116.1">
    <property type="nucleotide sequence ID" value="NC_000918.1"/>
</dbReference>
<dbReference type="RefSeq" id="WP_010881054.1">
    <property type="nucleotide sequence ID" value="NC_000918.1"/>
</dbReference>
<dbReference type="SMR" id="O67551"/>
<dbReference type="FunCoup" id="O67551">
    <property type="interactions" value="243"/>
</dbReference>
<dbReference type="STRING" id="224324.aq_1629"/>
<dbReference type="EnsemblBacteria" id="AAC07514">
    <property type="protein sequence ID" value="AAC07514"/>
    <property type="gene ID" value="aq_1629"/>
</dbReference>
<dbReference type="KEGG" id="aae:aq_1629"/>
<dbReference type="PATRIC" id="fig|224324.8.peg.1256"/>
<dbReference type="eggNOG" id="COG0648">
    <property type="taxonomic scope" value="Bacteria"/>
</dbReference>
<dbReference type="HOGENOM" id="CLU_025885_0_1_0"/>
<dbReference type="InParanoid" id="O67551"/>
<dbReference type="OrthoDB" id="9805666at2"/>
<dbReference type="Proteomes" id="UP000000798">
    <property type="component" value="Chromosome"/>
</dbReference>
<dbReference type="GO" id="GO:0008833">
    <property type="term" value="F:deoxyribonuclease IV (phage-T4-induced) activity"/>
    <property type="evidence" value="ECO:0007669"/>
    <property type="project" value="UniProtKB-UniRule"/>
</dbReference>
<dbReference type="GO" id="GO:0003677">
    <property type="term" value="F:DNA binding"/>
    <property type="evidence" value="ECO:0007669"/>
    <property type="project" value="InterPro"/>
</dbReference>
<dbReference type="GO" id="GO:0003906">
    <property type="term" value="F:DNA-(apurinic or apyrimidinic site) endonuclease activity"/>
    <property type="evidence" value="ECO:0000318"/>
    <property type="project" value="GO_Central"/>
</dbReference>
<dbReference type="GO" id="GO:0008081">
    <property type="term" value="F:phosphoric diester hydrolase activity"/>
    <property type="evidence" value="ECO:0000318"/>
    <property type="project" value="GO_Central"/>
</dbReference>
<dbReference type="GO" id="GO:0008270">
    <property type="term" value="F:zinc ion binding"/>
    <property type="evidence" value="ECO:0007669"/>
    <property type="project" value="UniProtKB-UniRule"/>
</dbReference>
<dbReference type="GO" id="GO:0006284">
    <property type="term" value="P:base-excision repair"/>
    <property type="evidence" value="ECO:0000318"/>
    <property type="project" value="GO_Central"/>
</dbReference>
<dbReference type="CDD" id="cd00019">
    <property type="entry name" value="AP2Ec"/>
    <property type="match status" value="1"/>
</dbReference>
<dbReference type="FunFam" id="3.20.20.150:FF:000001">
    <property type="entry name" value="Probable endonuclease 4"/>
    <property type="match status" value="1"/>
</dbReference>
<dbReference type="Gene3D" id="3.20.20.150">
    <property type="entry name" value="Divalent-metal-dependent TIM barrel enzymes"/>
    <property type="match status" value="1"/>
</dbReference>
<dbReference type="HAMAP" id="MF_00152">
    <property type="entry name" value="Nfo"/>
    <property type="match status" value="1"/>
</dbReference>
<dbReference type="InterPro" id="IPR001719">
    <property type="entry name" value="AP_endonuc_2"/>
</dbReference>
<dbReference type="InterPro" id="IPR018246">
    <property type="entry name" value="AP_endonuc_F2_Zn_BS"/>
</dbReference>
<dbReference type="InterPro" id="IPR036237">
    <property type="entry name" value="Xyl_isomerase-like_sf"/>
</dbReference>
<dbReference type="InterPro" id="IPR013022">
    <property type="entry name" value="Xyl_isomerase-like_TIM-brl"/>
</dbReference>
<dbReference type="NCBIfam" id="TIGR00587">
    <property type="entry name" value="nfo"/>
    <property type="match status" value="1"/>
</dbReference>
<dbReference type="PANTHER" id="PTHR21445:SF0">
    <property type="entry name" value="APURINIC-APYRIMIDINIC ENDONUCLEASE"/>
    <property type="match status" value="1"/>
</dbReference>
<dbReference type="PANTHER" id="PTHR21445">
    <property type="entry name" value="ENDONUCLEASE IV ENDODEOXYRIBONUCLEASE IV"/>
    <property type="match status" value="1"/>
</dbReference>
<dbReference type="Pfam" id="PF01261">
    <property type="entry name" value="AP_endonuc_2"/>
    <property type="match status" value="1"/>
</dbReference>
<dbReference type="SMART" id="SM00518">
    <property type="entry name" value="AP2Ec"/>
    <property type="match status" value="1"/>
</dbReference>
<dbReference type="SUPFAM" id="SSF51658">
    <property type="entry name" value="Xylose isomerase-like"/>
    <property type="match status" value="1"/>
</dbReference>
<dbReference type="PROSITE" id="PS00729">
    <property type="entry name" value="AP_NUCLEASE_F2_1"/>
    <property type="match status" value="1"/>
</dbReference>
<dbReference type="PROSITE" id="PS00730">
    <property type="entry name" value="AP_NUCLEASE_F2_2"/>
    <property type="match status" value="1"/>
</dbReference>
<dbReference type="PROSITE" id="PS00731">
    <property type="entry name" value="AP_NUCLEASE_F2_3"/>
    <property type="match status" value="1"/>
</dbReference>
<dbReference type="PROSITE" id="PS51432">
    <property type="entry name" value="AP_NUCLEASE_F2_4"/>
    <property type="match status" value="1"/>
</dbReference>
<reference key="1">
    <citation type="journal article" date="1998" name="Nature">
        <title>The complete genome of the hyperthermophilic bacterium Aquifex aeolicus.</title>
        <authorList>
            <person name="Deckert G."/>
            <person name="Warren P.V."/>
            <person name="Gaasterland T."/>
            <person name="Young W.G."/>
            <person name="Lenox A.L."/>
            <person name="Graham D.E."/>
            <person name="Overbeek R."/>
            <person name="Snead M.A."/>
            <person name="Keller M."/>
            <person name="Aujay M."/>
            <person name="Huber R."/>
            <person name="Feldman R.A."/>
            <person name="Short J.M."/>
            <person name="Olsen G.J."/>
            <person name="Swanson R.V."/>
        </authorList>
    </citation>
    <scope>NUCLEOTIDE SEQUENCE [LARGE SCALE GENOMIC DNA]</scope>
    <source>
        <strain>VF5</strain>
    </source>
</reference>
<feature type="chain" id="PRO_0000190818" description="Probable endonuclease 4">
    <location>
        <begin position="1"/>
        <end position="282"/>
    </location>
</feature>
<feature type="binding site" evidence="1">
    <location>
        <position position="66"/>
    </location>
    <ligand>
        <name>Zn(2+)</name>
        <dbReference type="ChEBI" id="CHEBI:29105"/>
        <label>1</label>
    </ligand>
</feature>
<feature type="binding site" evidence="1">
    <location>
        <position position="106"/>
    </location>
    <ligand>
        <name>Zn(2+)</name>
        <dbReference type="ChEBI" id="CHEBI:29105"/>
        <label>1</label>
    </ligand>
</feature>
<feature type="binding site" evidence="1">
    <location>
        <position position="143"/>
    </location>
    <ligand>
        <name>Zn(2+)</name>
        <dbReference type="ChEBI" id="CHEBI:29105"/>
        <label>1</label>
    </ligand>
</feature>
<feature type="binding site" evidence="1">
    <location>
        <position position="143"/>
    </location>
    <ligand>
        <name>Zn(2+)</name>
        <dbReference type="ChEBI" id="CHEBI:29105"/>
        <label>2</label>
    </ligand>
</feature>
<feature type="binding site" evidence="1">
    <location>
        <position position="176"/>
    </location>
    <ligand>
        <name>Zn(2+)</name>
        <dbReference type="ChEBI" id="CHEBI:29105"/>
        <label>2</label>
    </ligand>
</feature>
<feature type="binding site" evidence="1">
    <location>
        <position position="179"/>
    </location>
    <ligand>
        <name>Zn(2+)</name>
        <dbReference type="ChEBI" id="CHEBI:29105"/>
        <label>3</label>
    </ligand>
</feature>
<feature type="binding site" evidence="1">
    <location>
        <position position="213"/>
    </location>
    <ligand>
        <name>Zn(2+)</name>
        <dbReference type="ChEBI" id="CHEBI:29105"/>
        <label>2</label>
    </ligand>
</feature>
<feature type="binding site" evidence="1">
    <location>
        <position position="226"/>
    </location>
    <ligand>
        <name>Zn(2+)</name>
        <dbReference type="ChEBI" id="CHEBI:29105"/>
        <label>3</label>
    </ligand>
</feature>
<feature type="binding site" evidence="1">
    <location>
        <position position="228"/>
    </location>
    <ligand>
        <name>Zn(2+)</name>
        <dbReference type="ChEBI" id="CHEBI:29105"/>
        <label>3</label>
    </ligand>
</feature>
<feature type="binding site" evidence="1">
    <location>
        <position position="258"/>
    </location>
    <ligand>
        <name>Zn(2+)</name>
        <dbReference type="ChEBI" id="CHEBI:29105"/>
        <label>2</label>
    </ligand>
</feature>
<proteinExistence type="inferred from homology"/>
<gene>
    <name evidence="1" type="primary">nfo</name>
    <name type="ordered locus">aq_1629</name>
</gene>
<sequence length="282" mass="32265">MALFGAHVSSAGSILKTFKRAKDIGAEVFQFFLRSPRAWYWKGVDKETKQAFIEKLKDFKNPVMVHAPYLLNLASPNEELREKSVKVFLEELKFCDEVGIHFYNFHPGTAKGISDEEGLRNVIKSLEEVFSEYTPKFTTVLLENTAGERGDLGKNFKELKEIMNVFRGIKLGVCLDTCHAFAYGYEINTKEGFENFKREIEKMVGLESVKAVHANDSKVPLGGRKDRHEHIGKGYIGLEGFKNLLKDEYFSTLPYYIETPKENNMDPVNLSVLREIYQNNDL</sequence>